<comment type="function">
    <text evidence="5 6 7">Forms a complex with CRK36 that may negatively control abscisic acid (ABA) and osmotic stress signal transduction (PubMed:22225700). Involved in plant response to ABA during seed germination, early seedling growth and responses to abiotic stresses by inducing the expression of ABA-responsive genes and stress-inducible genes (PubMed:23583936). Acts as a positive regulator in disease resistance, downstream of NPR1 and WRKY70 (PubMed:24215930).</text>
</comment>
<comment type="catalytic activity">
    <reaction evidence="5">
        <text>L-seryl-[protein] + ATP = O-phospho-L-seryl-[protein] + ADP + H(+)</text>
        <dbReference type="Rhea" id="RHEA:17989"/>
        <dbReference type="Rhea" id="RHEA-COMP:9863"/>
        <dbReference type="Rhea" id="RHEA-COMP:11604"/>
        <dbReference type="ChEBI" id="CHEBI:15378"/>
        <dbReference type="ChEBI" id="CHEBI:29999"/>
        <dbReference type="ChEBI" id="CHEBI:30616"/>
        <dbReference type="ChEBI" id="CHEBI:83421"/>
        <dbReference type="ChEBI" id="CHEBI:456216"/>
        <dbReference type="EC" id="2.7.11.1"/>
    </reaction>
</comment>
<comment type="catalytic activity">
    <reaction evidence="5">
        <text>L-threonyl-[protein] + ATP = O-phospho-L-threonyl-[protein] + ADP + H(+)</text>
        <dbReference type="Rhea" id="RHEA:46608"/>
        <dbReference type="Rhea" id="RHEA-COMP:11060"/>
        <dbReference type="Rhea" id="RHEA-COMP:11605"/>
        <dbReference type="ChEBI" id="CHEBI:15378"/>
        <dbReference type="ChEBI" id="CHEBI:30013"/>
        <dbReference type="ChEBI" id="CHEBI:30616"/>
        <dbReference type="ChEBI" id="CHEBI:61977"/>
        <dbReference type="ChEBI" id="CHEBI:456216"/>
        <dbReference type="EC" id="2.7.11.1"/>
    </reaction>
</comment>
<comment type="subunit">
    <text evidence="5">Interacts with CRK36.</text>
</comment>
<comment type="subcellular location">
    <subcellularLocation>
        <location evidence="5">Cytoplasm</location>
        <location evidence="5">Cytosol</location>
    </subcellularLocation>
    <text evidence="5">Interacts with CRK36 at the cell surface.</text>
</comment>
<comment type="alternative products">
    <event type="alternative splicing"/>
    <isoform>
        <id>Q8GY82-1</id>
        <name>1</name>
        <sequence type="displayed"/>
    </isoform>
    <isoform>
        <id>Q8GY82-2</id>
        <name>2</name>
        <sequence type="described" ref="VSP_057613"/>
    </isoform>
</comment>
<comment type="induction">
    <text evidence="3 4 5 7">By ozone. Down-regulated by light stress (PubMed:20500828). Induced by infection with Hyaloperonospora arabidopsidis (PubMed:21711359). Induced by salt stress, drought stress and abscisic acid (ABA) (PubMed:22225700). Induced by salicylic acid (SA) and infection with the bacterial pathogen P.syringae and the necrotrophic fungal pathogen B.cinerea (PubMed:24215930).</text>
</comment>
<comment type="PTM">
    <text evidence="5">Autophosphorylated and phosphorylated by CRK36.</text>
</comment>
<comment type="disruption phenotype">
    <text evidence="5 7">No visible phenotype under normal growth conditions, but mutant seedlings show increased sensitivity to abscisic acid (ABA) and salt stress during post-germinative growth (PubMed:22225700). Increased susceptibility to P.syringae infection. Weak expression of pathogenesis-related (PR) genes after infection with P.syringae or salicylic acid (SA) treatment (PubMed:24215930).</text>
</comment>
<comment type="miscellaneous">
    <molecule>Isoform 2</molecule>
    <text evidence="10">May be due to a competing acceptor splice site.</text>
</comment>
<comment type="similarity">
    <text evidence="10">Belongs to the protein kinase superfamily. Ser/Thr protein kinase family. CRK subfamily.</text>
</comment>
<keyword id="KW-0025">Alternative splicing</keyword>
<keyword id="KW-0067">ATP-binding</keyword>
<keyword id="KW-0963">Cytoplasm</keyword>
<keyword id="KW-0418">Kinase</keyword>
<keyword id="KW-0547">Nucleotide-binding</keyword>
<keyword id="KW-0597">Phosphoprotein</keyword>
<keyword id="KW-0611">Plant defense</keyword>
<keyword id="KW-1185">Reference proteome</keyword>
<keyword id="KW-0723">Serine/threonine-protein kinase</keyword>
<keyword id="KW-0346">Stress response</keyword>
<keyword id="KW-0808">Transferase</keyword>
<feature type="chain" id="PRO_0000432854" description="Cysteine-rich receptor-like protein kinase 45">
    <location>
        <begin position="1"/>
        <end position="351"/>
    </location>
</feature>
<feature type="domain" description="Protein kinase" evidence="2">
    <location>
        <begin position="37"/>
        <end position="287"/>
    </location>
</feature>
<feature type="active site" description="Proton acceptor" evidence="2">
    <location>
        <position position="162"/>
    </location>
</feature>
<feature type="binding site" evidence="2">
    <location>
        <begin position="43"/>
        <end position="51"/>
    </location>
    <ligand>
        <name>ATP</name>
        <dbReference type="ChEBI" id="CHEBI:30616"/>
    </ligand>
</feature>
<feature type="binding site" evidence="2">
    <location>
        <position position="65"/>
    </location>
    <ligand>
        <name>ATP</name>
        <dbReference type="ChEBI" id="CHEBI:30616"/>
    </ligand>
</feature>
<feature type="modified residue" description="Phosphotyrosine" evidence="1">
    <location>
        <position position="110"/>
    </location>
</feature>
<feature type="modified residue" description="Phosphothreonine" evidence="1">
    <location>
        <position position="197"/>
    </location>
</feature>
<feature type="modified residue" description="Phosphothreonine" evidence="1">
    <location>
        <position position="202"/>
    </location>
</feature>
<feature type="modified residue" description="Phosphotyrosine" evidence="1">
    <location>
        <position position="210"/>
    </location>
</feature>
<feature type="splice variant" id="VSP_057613" description="In isoform 2.">
    <original>F</original>
    <variation>SV</variation>
    <location>
        <position position="24"/>
    </location>
</feature>
<feature type="mutagenesis site" description="Loss of function." evidence="5">
    <original>K</original>
    <variation>E</variation>
    <location>
        <position position="65"/>
    </location>
</feature>
<feature type="mutagenesis site" description="Constitutively active form." evidence="5">
    <original>GFE</original>
    <variation>DFG</variation>
    <location>
        <begin position="180"/>
        <end position="182"/>
    </location>
</feature>
<sequence>MAVTSLLDTVFRRRKKKSTEFISFFEFDLDTIKAATNDFSELVGRGGFGFVYKGRLQNGQEIAVKILSTSSIRTERQFHNELIILSKLKHKNLINLLGFCTKRDQHGLVYEFMPNSSLDCFILDPHRAAQLNWEMCRNIIDGIARGLRYLHEESGLWVVHRDIKPGNILLDSDLKPKIVGFELARTMQQGENAAETTEIVGTVGYLDPEYIRSGRVSVKSDVYAFGVTILTIISRRKAWSVDGDSLIKYVRRCWNRGEAIDVIHEVMREEEREYSISEILRYIHIALLCVDENAERRPNIDKVLHWFSCFSTPLPDPTFGNRFLVEEETNWPWSPSLSPGHSSVTSPISSR</sequence>
<proteinExistence type="evidence at protein level"/>
<gene>
    <name evidence="8" type="primary">CRK45</name>
    <name evidence="9" type="synonym">ARCK1</name>
    <name evidence="11" type="ordered locus">At4g11890</name>
</gene>
<dbReference type="EC" id="2.7.11.1" evidence="5"/>
<dbReference type="EMBL" id="AL078606">
    <property type="protein sequence ID" value="CAB44327.1"/>
    <property type="molecule type" value="Genomic_DNA"/>
</dbReference>
<dbReference type="EMBL" id="AL161533">
    <property type="protein sequence ID" value="CAB78232.1"/>
    <property type="molecule type" value="Genomic_DNA"/>
</dbReference>
<dbReference type="EMBL" id="CP002687">
    <property type="protein sequence ID" value="AEE83063.1"/>
    <property type="molecule type" value="Genomic_DNA"/>
</dbReference>
<dbReference type="EMBL" id="CP002687">
    <property type="protein sequence ID" value="AEE83065.1"/>
    <property type="molecule type" value="Genomic_DNA"/>
</dbReference>
<dbReference type="EMBL" id="BT006243">
    <property type="protein sequence ID" value="AAP12892.1"/>
    <property type="molecule type" value="mRNA"/>
</dbReference>
<dbReference type="EMBL" id="AK117801">
    <property type="protein sequence ID" value="BAC42446.1"/>
    <property type="molecule type" value="mRNA"/>
</dbReference>
<dbReference type="PIR" id="T09348">
    <property type="entry name" value="T09348"/>
</dbReference>
<dbReference type="RefSeq" id="NP_192926.1">
    <molecule id="Q8GY82-2"/>
    <property type="nucleotide sequence ID" value="NM_117259.4"/>
</dbReference>
<dbReference type="RefSeq" id="NP_849362.1">
    <molecule id="Q8GY82-1"/>
    <property type="nucleotide sequence ID" value="NM_179031.2"/>
</dbReference>
<dbReference type="SMR" id="Q8GY82"/>
<dbReference type="FunCoup" id="Q8GY82">
    <property type="interactions" value="11"/>
</dbReference>
<dbReference type="IntAct" id="Q8GY82">
    <property type="interactions" value="5"/>
</dbReference>
<dbReference type="STRING" id="3702.Q8GY82"/>
<dbReference type="iPTMnet" id="Q8GY82"/>
<dbReference type="PaxDb" id="3702-AT4G11890.3"/>
<dbReference type="ProteomicsDB" id="224553">
    <molecule id="Q8GY82-1"/>
</dbReference>
<dbReference type="EnsemblPlants" id="AT4G11890.1">
    <molecule id="Q8GY82-1"/>
    <property type="protein sequence ID" value="AT4G11890.1"/>
    <property type="gene ID" value="AT4G11890"/>
</dbReference>
<dbReference type="EnsemblPlants" id="AT4G11890.2">
    <molecule id="Q8GY82-2"/>
    <property type="protein sequence ID" value="AT4G11890.2"/>
    <property type="gene ID" value="AT4G11890"/>
</dbReference>
<dbReference type="GeneID" id="826796"/>
<dbReference type="Gramene" id="AT4G11890.1">
    <molecule id="Q8GY82-1"/>
    <property type="protein sequence ID" value="AT4G11890.1"/>
    <property type="gene ID" value="AT4G11890"/>
</dbReference>
<dbReference type="Gramene" id="AT4G11890.2">
    <molecule id="Q8GY82-2"/>
    <property type="protein sequence ID" value="AT4G11890.2"/>
    <property type="gene ID" value="AT4G11890"/>
</dbReference>
<dbReference type="KEGG" id="ath:AT4G11890"/>
<dbReference type="Araport" id="AT4G11890"/>
<dbReference type="TAIR" id="AT4G11890">
    <property type="gene designation" value="ARCK1"/>
</dbReference>
<dbReference type="eggNOG" id="KOG1187">
    <property type="taxonomic scope" value="Eukaryota"/>
</dbReference>
<dbReference type="HOGENOM" id="CLU_000288_21_4_1"/>
<dbReference type="InParanoid" id="Q8GY82"/>
<dbReference type="OMA" id="SWEMCRN"/>
<dbReference type="PhylomeDB" id="Q8GY82"/>
<dbReference type="PRO" id="PR:Q8GY82"/>
<dbReference type="Proteomes" id="UP000006548">
    <property type="component" value="Chromosome 4"/>
</dbReference>
<dbReference type="ExpressionAtlas" id="Q8GY82">
    <property type="expression patterns" value="baseline and differential"/>
</dbReference>
<dbReference type="GO" id="GO:0005829">
    <property type="term" value="C:cytosol"/>
    <property type="evidence" value="ECO:0000314"/>
    <property type="project" value="UniProtKB"/>
</dbReference>
<dbReference type="GO" id="GO:0005524">
    <property type="term" value="F:ATP binding"/>
    <property type="evidence" value="ECO:0007669"/>
    <property type="project" value="UniProtKB-KW"/>
</dbReference>
<dbReference type="GO" id="GO:0106310">
    <property type="term" value="F:protein serine kinase activity"/>
    <property type="evidence" value="ECO:0007669"/>
    <property type="project" value="RHEA"/>
</dbReference>
<dbReference type="GO" id="GO:0004674">
    <property type="term" value="F:protein serine/threonine kinase activity"/>
    <property type="evidence" value="ECO:0000314"/>
    <property type="project" value="UniProtKB"/>
</dbReference>
<dbReference type="GO" id="GO:0006952">
    <property type="term" value="P:defense response"/>
    <property type="evidence" value="ECO:0007669"/>
    <property type="project" value="UniProtKB-KW"/>
</dbReference>
<dbReference type="GO" id="GO:0031349">
    <property type="term" value="P:positive regulation of defense response"/>
    <property type="evidence" value="ECO:0000315"/>
    <property type="project" value="UniProtKB"/>
</dbReference>
<dbReference type="GO" id="GO:0009787">
    <property type="term" value="P:regulation of abscisic acid-activated signaling pathway"/>
    <property type="evidence" value="ECO:0000315"/>
    <property type="project" value="UniProtKB"/>
</dbReference>
<dbReference type="FunFam" id="1.10.510.10:FF:001718">
    <property type="entry name" value="Protein kinase superfamily protein"/>
    <property type="match status" value="1"/>
</dbReference>
<dbReference type="Gene3D" id="3.30.200.20">
    <property type="entry name" value="Phosphorylase Kinase, domain 1"/>
    <property type="match status" value="1"/>
</dbReference>
<dbReference type="Gene3D" id="1.10.510.10">
    <property type="entry name" value="Transferase(Phosphotransferase) domain 1"/>
    <property type="match status" value="1"/>
</dbReference>
<dbReference type="InterPro" id="IPR011009">
    <property type="entry name" value="Kinase-like_dom_sf"/>
</dbReference>
<dbReference type="InterPro" id="IPR000719">
    <property type="entry name" value="Prot_kinase_dom"/>
</dbReference>
<dbReference type="InterPro" id="IPR017441">
    <property type="entry name" value="Protein_kinase_ATP_BS"/>
</dbReference>
<dbReference type="InterPro" id="IPR008271">
    <property type="entry name" value="Ser/Thr_kinase_AS"/>
</dbReference>
<dbReference type="PANTHER" id="PTHR27006">
    <property type="entry name" value="PROMASTIGOTE SURFACE ANTIGEN PROTEIN PSA"/>
    <property type="match status" value="1"/>
</dbReference>
<dbReference type="PANTHER" id="PTHR27006:SF634">
    <property type="entry name" value="RECEPTOR-LIKE SERINE_THREONINE-PROTEIN KINASE"/>
    <property type="match status" value="1"/>
</dbReference>
<dbReference type="Pfam" id="PF00069">
    <property type="entry name" value="Pkinase"/>
    <property type="match status" value="1"/>
</dbReference>
<dbReference type="SMART" id="SM00220">
    <property type="entry name" value="S_TKc"/>
    <property type="match status" value="1"/>
</dbReference>
<dbReference type="SUPFAM" id="SSF56112">
    <property type="entry name" value="Protein kinase-like (PK-like)"/>
    <property type="match status" value="1"/>
</dbReference>
<dbReference type="PROSITE" id="PS00107">
    <property type="entry name" value="PROTEIN_KINASE_ATP"/>
    <property type="match status" value="1"/>
</dbReference>
<dbReference type="PROSITE" id="PS50011">
    <property type="entry name" value="PROTEIN_KINASE_DOM"/>
    <property type="match status" value="1"/>
</dbReference>
<dbReference type="PROSITE" id="PS00108">
    <property type="entry name" value="PROTEIN_KINASE_ST"/>
    <property type="match status" value="1"/>
</dbReference>
<evidence type="ECO:0000250" key="1">
    <source>
        <dbReference type="UniProtKB" id="O48814"/>
    </source>
</evidence>
<evidence type="ECO:0000255" key="2">
    <source>
        <dbReference type="PROSITE-ProRule" id="PRU00159"/>
    </source>
</evidence>
<evidence type="ECO:0000269" key="3">
    <source>
    </source>
</evidence>
<evidence type="ECO:0000269" key="4">
    <source>
    </source>
</evidence>
<evidence type="ECO:0000269" key="5">
    <source>
    </source>
</evidence>
<evidence type="ECO:0000269" key="6">
    <source>
    </source>
</evidence>
<evidence type="ECO:0000269" key="7">
    <source>
    </source>
</evidence>
<evidence type="ECO:0000303" key="8">
    <source>
    </source>
</evidence>
<evidence type="ECO:0000303" key="9">
    <source>
    </source>
</evidence>
<evidence type="ECO:0000305" key="10"/>
<evidence type="ECO:0000312" key="11">
    <source>
        <dbReference type="Araport" id="AT4G11890"/>
    </source>
</evidence>
<accession>Q8GY82</accession>
<accession>Q9T057</accession>
<protein>
    <recommendedName>
        <fullName evidence="10">Cysteine-rich receptor-like protein kinase 45</fullName>
        <shortName evidence="10">Cysteine-rich RLK45</shortName>
        <ecNumber evidence="5">2.7.11.1</ecNumber>
    </recommendedName>
    <alternativeName>
        <fullName evidence="9">ABA- and osmotic stress-inducible receptor-like cytosolic kinase 1</fullName>
    </alternativeName>
</protein>
<organism>
    <name type="scientific">Arabidopsis thaliana</name>
    <name type="common">Mouse-ear cress</name>
    <dbReference type="NCBI Taxonomy" id="3702"/>
    <lineage>
        <taxon>Eukaryota</taxon>
        <taxon>Viridiplantae</taxon>
        <taxon>Streptophyta</taxon>
        <taxon>Embryophyta</taxon>
        <taxon>Tracheophyta</taxon>
        <taxon>Spermatophyta</taxon>
        <taxon>Magnoliopsida</taxon>
        <taxon>eudicotyledons</taxon>
        <taxon>Gunneridae</taxon>
        <taxon>Pentapetalae</taxon>
        <taxon>rosids</taxon>
        <taxon>malvids</taxon>
        <taxon>Brassicales</taxon>
        <taxon>Brassicaceae</taxon>
        <taxon>Camelineae</taxon>
        <taxon>Arabidopsis</taxon>
    </lineage>
</organism>
<reference key="1">
    <citation type="journal article" date="1999" name="Nature">
        <title>Sequence and analysis of chromosome 4 of the plant Arabidopsis thaliana.</title>
        <authorList>
            <person name="Mayer K.F.X."/>
            <person name="Schueller C."/>
            <person name="Wambutt R."/>
            <person name="Murphy G."/>
            <person name="Volckaert G."/>
            <person name="Pohl T."/>
            <person name="Duesterhoeft A."/>
            <person name="Stiekema W."/>
            <person name="Entian K.-D."/>
            <person name="Terryn N."/>
            <person name="Harris B."/>
            <person name="Ansorge W."/>
            <person name="Brandt P."/>
            <person name="Grivell L.A."/>
            <person name="Rieger M."/>
            <person name="Weichselgartner M."/>
            <person name="de Simone V."/>
            <person name="Obermaier B."/>
            <person name="Mache R."/>
            <person name="Mueller M."/>
            <person name="Kreis M."/>
            <person name="Delseny M."/>
            <person name="Puigdomenech P."/>
            <person name="Watson M."/>
            <person name="Schmidtheini T."/>
            <person name="Reichert B."/>
            <person name="Portetelle D."/>
            <person name="Perez-Alonso M."/>
            <person name="Boutry M."/>
            <person name="Bancroft I."/>
            <person name="Vos P."/>
            <person name="Hoheisel J."/>
            <person name="Zimmermann W."/>
            <person name="Wedler H."/>
            <person name="Ridley P."/>
            <person name="Langham S.-A."/>
            <person name="McCullagh B."/>
            <person name="Bilham L."/>
            <person name="Robben J."/>
            <person name="van der Schueren J."/>
            <person name="Grymonprez B."/>
            <person name="Chuang Y.-J."/>
            <person name="Vandenbussche F."/>
            <person name="Braeken M."/>
            <person name="Weltjens I."/>
            <person name="Voet M."/>
            <person name="Bastiaens I."/>
            <person name="Aert R."/>
            <person name="Defoor E."/>
            <person name="Weitzenegger T."/>
            <person name="Bothe G."/>
            <person name="Ramsperger U."/>
            <person name="Hilbert H."/>
            <person name="Braun M."/>
            <person name="Holzer E."/>
            <person name="Brandt A."/>
            <person name="Peters S."/>
            <person name="van Staveren M."/>
            <person name="Dirkse W."/>
            <person name="Mooijman P."/>
            <person name="Klein Lankhorst R."/>
            <person name="Rose M."/>
            <person name="Hauf J."/>
            <person name="Koetter P."/>
            <person name="Berneiser S."/>
            <person name="Hempel S."/>
            <person name="Feldpausch M."/>
            <person name="Lamberth S."/>
            <person name="Van den Daele H."/>
            <person name="De Keyser A."/>
            <person name="Buysshaert C."/>
            <person name="Gielen J."/>
            <person name="Villarroel R."/>
            <person name="De Clercq R."/>
            <person name="van Montagu M."/>
            <person name="Rogers J."/>
            <person name="Cronin A."/>
            <person name="Quail M.A."/>
            <person name="Bray-Allen S."/>
            <person name="Clark L."/>
            <person name="Doggett J."/>
            <person name="Hall S."/>
            <person name="Kay M."/>
            <person name="Lennard N."/>
            <person name="McLay K."/>
            <person name="Mayes R."/>
            <person name="Pettett A."/>
            <person name="Rajandream M.A."/>
            <person name="Lyne M."/>
            <person name="Benes V."/>
            <person name="Rechmann S."/>
            <person name="Borkova D."/>
            <person name="Bloecker H."/>
            <person name="Scharfe M."/>
            <person name="Grimm M."/>
            <person name="Loehnert T.-H."/>
            <person name="Dose S."/>
            <person name="de Haan M."/>
            <person name="Maarse A.C."/>
            <person name="Schaefer M."/>
            <person name="Mueller-Auer S."/>
            <person name="Gabel C."/>
            <person name="Fuchs M."/>
            <person name="Fartmann B."/>
            <person name="Granderath K."/>
            <person name="Dauner D."/>
            <person name="Herzl A."/>
            <person name="Neumann S."/>
            <person name="Argiriou A."/>
            <person name="Vitale D."/>
            <person name="Liguori R."/>
            <person name="Piravandi E."/>
            <person name="Massenet O."/>
            <person name="Quigley F."/>
            <person name="Clabauld G."/>
            <person name="Muendlein A."/>
            <person name="Felber R."/>
            <person name="Schnabl S."/>
            <person name="Hiller R."/>
            <person name="Schmidt W."/>
            <person name="Lecharny A."/>
            <person name="Aubourg S."/>
            <person name="Chefdor F."/>
            <person name="Cooke R."/>
            <person name="Berger C."/>
            <person name="Monfort A."/>
            <person name="Casacuberta E."/>
            <person name="Gibbons T."/>
            <person name="Weber N."/>
            <person name="Vandenbol M."/>
            <person name="Bargues M."/>
            <person name="Terol J."/>
            <person name="Torres A."/>
            <person name="Perez-Perez A."/>
            <person name="Purnelle B."/>
            <person name="Bent E."/>
            <person name="Johnson S."/>
            <person name="Tacon D."/>
            <person name="Jesse T."/>
            <person name="Heijnen L."/>
            <person name="Schwarz S."/>
            <person name="Scholler P."/>
            <person name="Heber S."/>
            <person name="Francs P."/>
            <person name="Bielke C."/>
            <person name="Frishman D."/>
            <person name="Haase D."/>
            <person name="Lemcke K."/>
            <person name="Mewes H.-W."/>
            <person name="Stocker S."/>
            <person name="Zaccaria P."/>
            <person name="Bevan M."/>
            <person name="Wilson R.K."/>
            <person name="de la Bastide M."/>
            <person name="Habermann K."/>
            <person name="Parnell L."/>
            <person name="Dedhia N."/>
            <person name="Gnoj L."/>
            <person name="Schutz K."/>
            <person name="Huang E."/>
            <person name="Spiegel L."/>
            <person name="Sekhon M."/>
            <person name="Murray J."/>
            <person name="Sheet P."/>
            <person name="Cordes M."/>
            <person name="Abu-Threideh J."/>
            <person name="Stoneking T."/>
            <person name="Kalicki J."/>
            <person name="Graves T."/>
            <person name="Harmon G."/>
            <person name="Edwards J."/>
            <person name="Latreille P."/>
            <person name="Courtney L."/>
            <person name="Cloud J."/>
            <person name="Abbott A."/>
            <person name="Scott K."/>
            <person name="Johnson D."/>
            <person name="Minx P."/>
            <person name="Bentley D."/>
            <person name="Fulton B."/>
            <person name="Miller N."/>
            <person name="Greco T."/>
            <person name="Kemp K."/>
            <person name="Kramer J."/>
            <person name="Fulton L."/>
            <person name="Mardis E."/>
            <person name="Dante M."/>
            <person name="Pepin K."/>
            <person name="Hillier L.W."/>
            <person name="Nelson J."/>
            <person name="Spieth J."/>
            <person name="Ryan E."/>
            <person name="Andrews S."/>
            <person name="Geisel C."/>
            <person name="Layman D."/>
            <person name="Du H."/>
            <person name="Ali J."/>
            <person name="Berghoff A."/>
            <person name="Jones K."/>
            <person name="Drone K."/>
            <person name="Cotton M."/>
            <person name="Joshu C."/>
            <person name="Antonoiu B."/>
            <person name="Zidanic M."/>
            <person name="Strong C."/>
            <person name="Sun H."/>
            <person name="Lamar B."/>
            <person name="Yordan C."/>
            <person name="Ma P."/>
            <person name="Zhong J."/>
            <person name="Preston R."/>
            <person name="Vil D."/>
            <person name="Shekher M."/>
            <person name="Matero A."/>
            <person name="Shah R."/>
            <person name="Swaby I.K."/>
            <person name="O'Shaughnessy A."/>
            <person name="Rodriguez M."/>
            <person name="Hoffman J."/>
            <person name="Till S."/>
            <person name="Granat S."/>
            <person name="Shohdy N."/>
            <person name="Hasegawa A."/>
            <person name="Hameed A."/>
            <person name="Lodhi M."/>
            <person name="Johnson A."/>
            <person name="Chen E."/>
            <person name="Marra M.A."/>
            <person name="Martienssen R."/>
            <person name="McCombie W.R."/>
        </authorList>
    </citation>
    <scope>NUCLEOTIDE SEQUENCE [LARGE SCALE GENOMIC DNA]</scope>
    <source>
        <strain>cv. Columbia</strain>
    </source>
</reference>
<reference key="2">
    <citation type="journal article" date="2017" name="Plant J.">
        <title>Araport11: a complete reannotation of the Arabidopsis thaliana reference genome.</title>
        <authorList>
            <person name="Cheng C.Y."/>
            <person name="Krishnakumar V."/>
            <person name="Chan A.P."/>
            <person name="Thibaud-Nissen F."/>
            <person name="Schobel S."/>
            <person name="Town C.D."/>
        </authorList>
    </citation>
    <scope>GENOME REANNOTATION</scope>
    <source>
        <strain>cv. Columbia</strain>
    </source>
</reference>
<reference key="3">
    <citation type="journal article" date="2002" name="Science">
        <title>Functional annotation of a full-length Arabidopsis cDNA collection.</title>
        <authorList>
            <person name="Seki M."/>
            <person name="Narusaka M."/>
            <person name="Kamiya A."/>
            <person name="Ishida J."/>
            <person name="Satou M."/>
            <person name="Sakurai T."/>
            <person name="Nakajima M."/>
            <person name="Enju A."/>
            <person name="Akiyama K."/>
            <person name="Oono Y."/>
            <person name="Muramatsu M."/>
            <person name="Hayashizaki Y."/>
            <person name="Kawai J."/>
            <person name="Carninci P."/>
            <person name="Itoh M."/>
            <person name="Ishii Y."/>
            <person name="Arakawa T."/>
            <person name="Shibata K."/>
            <person name="Shinagawa A."/>
            <person name="Shinozaki K."/>
        </authorList>
    </citation>
    <scope>NUCLEOTIDE SEQUENCE [LARGE SCALE MRNA] (ISOFORM 1)</scope>
    <source>
        <strain>cv. Columbia</strain>
    </source>
</reference>
<reference key="4">
    <citation type="journal article" date="2003" name="Science">
        <title>Empirical analysis of transcriptional activity in the Arabidopsis genome.</title>
        <authorList>
            <person name="Yamada K."/>
            <person name="Lim J."/>
            <person name="Dale J.M."/>
            <person name="Chen H."/>
            <person name="Shinn P."/>
            <person name="Palm C.J."/>
            <person name="Southwick A.M."/>
            <person name="Wu H.C."/>
            <person name="Kim C.J."/>
            <person name="Nguyen M."/>
            <person name="Pham P.K."/>
            <person name="Cheuk R.F."/>
            <person name="Karlin-Newmann G."/>
            <person name="Liu S.X."/>
            <person name="Lam B."/>
            <person name="Sakano H."/>
            <person name="Wu T."/>
            <person name="Yu G."/>
            <person name="Miranda M."/>
            <person name="Quach H.L."/>
            <person name="Tripp M."/>
            <person name="Chang C.H."/>
            <person name="Lee J.M."/>
            <person name="Toriumi M.J."/>
            <person name="Chan M.M."/>
            <person name="Tang C.C."/>
            <person name="Onodera C.S."/>
            <person name="Deng J.M."/>
            <person name="Akiyama K."/>
            <person name="Ansari Y."/>
            <person name="Arakawa T."/>
            <person name="Banh J."/>
            <person name="Banno F."/>
            <person name="Bowser L."/>
            <person name="Brooks S.Y."/>
            <person name="Carninci P."/>
            <person name="Chao Q."/>
            <person name="Choy N."/>
            <person name="Enju A."/>
            <person name="Goldsmith A.D."/>
            <person name="Gurjal M."/>
            <person name="Hansen N.F."/>
            <person name="Hayashizaki Y."/>
            <person name="Johnson-Hopson C."/>
            <person name="Hsuan V.W."/>
            <person name="Iida K."/>
            <person name="Karnes M."/>
            <person name="Khan S."/>
            <person name="Koesema E."/>
            <person name="Ishida J."/>
            <person name="Jiang P.X."/>
            <person name="Jones T."/>
            <person name="Kawai J."/>
            <person name="Kamiya A."/>
            <person name="Meyers C."/>
            <person name="Nakajima M."/>
            <person name="Narusaka M."/>
            <person name="Seki M."/>
            <person name="Sakurai T."/>
            <person name="Satou M."/>
            <person name="Tamse R."/>
            <person name="Vaysberg M."/>
            <person name="Wallender E.K."/>
            <person name="Wong C."/>
            <person name="Yamamura Y."/>
            <person name="Yuan S."/>
            <person name="Shinozaki K."/>
            <person name="Davis R.W."/>
            <person name="Theologis A."/>
            <person name="Ecker J.R."/>
        </authorList>
    </citation>
    <scope>NUCLEOTIDE SEQUENCE [LARGE SCALE MRNA] (ISOFORM 1)</scope>
    <source>
        <strain>cv. Columbia</strain>
    </source>
</reference>
<reference key="5">
    <citation type="journal article" date="2010" name="BMC Plant Biol.">
        <title>Transcriptional regulation of the CRK/DUF26 group of receptor-like protein kinases by ozone and plant hormones in Arabidopsis.</title>
        <authorList>
            <person name="Wrzaczek M."/>
            <person name="Brosche M."/>
            <person name="Salojarvi J."/>
            <person name="Kangasjarvi S."/>
            <person name="Idanheimo N."/>
            <person name="Mersmann S."/>
            <person name="Robatzek S."/>
            <person name="Karpinski S."/>
            <person name="Karpinska B."/>
            <person name="Kangasjarvi J."/>
        </authorList>
    </citation>
    <scope>INDUCTION</scope>
</reference>
<reference key="6">
    <citation type="journal article" date="2011" name="Plant Cell Environ.">
        <title>An Arabidopsis (malectin-like) leucine-rich repeat receptor-like kinase contributes to downy mildew disease.</title>
        <authorList>
            <person name="Hok S."/>
            <person name="Danchin E.G."/>
            <person name="Allasia V."/>
            <person name="Panabieres F."/>
            <person name="Attard A."/>
            <person name="Keller H."/>
        </authorList>
    </citation>
    <scope>INDUCTION</scope>
</reference>
<reference key="7">
    <citation type="journal article" date="2012" name="Plant J.">
        <title>Abiotic stress-inducible receptor-like kinases negatively control ABA signaling in Arabidopsis.</title>
        <authorList>
            <person name="Tanaka H."/>
            <person name="Osakabe Y."/>
            <person name="Katsura S."/>
            <person name="Mizuno S."/>
            <person name="Maruyama K."/>
            <person name="Kusakabe K."/>
            <person name="Mizoi J."/>
            <person name="Shinozaki K."/>
            <person name="Yamaguchi-Shinozaki K."/>
        </authorList>
    </citation>
    <scope>FUNCTION</scope>
    <scope>CATALYTIC ACTIVITY</scope>
    <scope>INTERACTION WITH CRK36</scope>
    <scope>SUBCELLULAR LOCATION</scope>
    <scope>INDUCTION</scope>
    <scope>AUTOPHOSPHORYLATION</scope>
    <scope>MUTAGENESIS OF LYS-65 AND 180-GLY--GLU-182</scope>
    <scope>DISRUPTION PHENOTYPE</scope>
</reference>
<reference key="8">
    <citation type="journal article" date="2013" name="Plant Physiol. Biochem.">
        <title>Arabidopsis cysteine-rich receptor-like kinase 45 functions in the responses to abscisic acid and abiotic stresses.</title>
        <authorList>
            <person name="Zhang X."/>
            <person name="Yang G."/>
            <person name="Shi R."/>
            <person name="Han X."/>
            <person name="Qi L."/>
            <person name="Wang R."/>
            <person name="Xiong L."/>
            <person name="Li G."/>
        </authorList>
    </citation>
    <scope>FUNCTION</scope>
</reference>
<reference key="9">
    <citation type="journal article" date="2013" name="Plant Physiol. Biochem.">
        <title>Arabidopsis cysteine-rich receptor-like kinase 45 positively regulates disease resistance to Pseudomonas syringae.</title>
        <authorList>
            <person name="Zhang X."/>
            <person name="Han X."/>
            <person name="Shi R."/>
            <person name="Yang G."/>
            <person name="Qi L."/>
            <person name="Wang R."/>
            <person name="Li G."/>
        </authorList>
    </citation>
    <scope>FUNCTION</scope>
    <scope>INDUCTION</scope>
    <scope>DISRUPTION PHENOTYPE</scope>
</reference>
<name>CRK45_ARATH</name>